<protein>
    <recommendedName>
        <fullName evidence="4">Immunoglobulin J chain</fullName>
    </recommendedName>
</protein>
<gene>
    <name evidence="4" type="primary">Jchain</name>
    <name type="synonym">Igj</name>
</gene>
<name>IGJ_MOUSE</name>
<accession>P01592</accession>
<evidence type="ECO:0000250" key="1">
    <source>
        <dbReference type="UniProtKB" id="P01591"/>
    </source>
</evidence>
<evidence type="ECO:0000269" key="2">
    <source>
    </source>
</evidence>
<evidence type="ECO:0000305" key="3"/>
<evidence type="ECO:0000312" key="4">
    <source>
        <dbReference type="MGI" id="MGI:96493"/>
    </source>
</evidence>
<evidence type="ECO:0007829" key="5">
    <source>
        <dbReference type="PDB" id="7JG1"/>
    </source>
</evidence>
<evidence type="ECO:0007829" key="6">
    <source>
        <dbReference type="PDB" id="7JG2"/>
    </source>
</evidence>
<feature type="signal peptide">
    <location>
        <begin position="1"/>
        <end position="21"/>
    </location>
</feature>
<feature type="chain" id="PRO_0000021486" description="Immunoglobulin J chain">
    <location>
        <begin position="22"/>
        <end position="159"/>
    </location>
</feature>
<feature type="glycosylation site" description="N-linked (GlcNAc...) (complex) asparagine" evidence="1">
    <location>
        <position position="70"/>
    </location>
</feature>
<feature type="disulfide bond" evidence="1">
    <location>
        <begin position="34"/>
        <end position="123"/>
    </location>
</feature>
<feature type="disulfide bond" description="Interchain (with heavy chain)" evidence="1">
    <location>
        <position position="36"/>
    </location>
</feature>
<feature type="disulfide bond" description="Interchain (with heavy chain)" evidence="1">
    <location>
        <position position="90"/>
    </location>
</feature>
<feature type="disulfide bond" evidence="1">
    <location>
        <begin position="93"/>
        <end position="113"/>
    </location>
</feature>
<feature type="disulfide bond" evidence="1">
    <location>
        <begin position="131"/>
        <end position="156"/>
    </location>
</feature>
<feature type="sequence conflict" description="In Ref. 1; AAA38674." evidence="3" ref="1">
    <original>A</original>
    <variation>V</variation>
    <location>
        <position position="17"/>
    </location>
</feature>
<feature type="sequence conflict" description="In Ref. 1; AAA38674." evidence="3" ref="1">
    <original>R</original>
    <variation>K</variation>
    <location>
        <position position="42"/>
    </location>
</feature>
<feature type="sequence conflict" description="In Ref. 3; AAA38673." evidence="3" ref="3">
    <original>V</original>
    <variation>L</variation>
    <location>
        <position position="89"/>
    </location>
</feature>
<feature type="sequence conflict" description="In Ref. 3; AAA38673." evidence="3" ref="3">
    <original>LR</original>
    <variation>PG</variation>
    <location>
        <begin position="138"/>
        <end position="139"/>
    </location>
</feature>
<feature type="strand" evidence="5">
    <location>
        <begin position="27"/>
        <end position="30"/>
    </location>
</feature>
<feature type="turn" evidence="5">
    <location>
        <begin position="33"/>
        <end position="36"/>
    </location>
</feature>
<feature type="strand" evidence="5">
    <location>
        <begin position="37"/>
        <end position="45"/>
    </location>
</feature>
<feature type="strand" evidence="5">
    <location>
        <begin position="53"/>
        <end position="66"/>
    </location>
</feature>
<feature type="strand" evidence="5">
    <location>
        <begin position="74"/>
        <end position="76"/>
    </location>
</feature>
<feature type="strand" evidence="5">
    <location>
        <begin position="81"/>
        <end position="85"/>
    </location>
</feature>
<feature type="helix" evidence="5">
    <location>
        <begin position="86"/>
        <end position="89"/>
    </location>
</feature>
<feature type="strand" evidence="5">
    <location>
        <begin position="96"/>
        <end position="100"/>
    </location>
</feature>
<feature type="strand" evidence="5">
    <location>
        <begin position="103"/>
        <end position="108"/>
    </location>
</feature>
<feature type="strand" evidence="5">
    <location>
        <begin position="125"/>
        <end position="127"/>
    </location>
</feature>
<feature type="strand" evidence="5">
    <location>
        <begin position="133"/>
        <end position="140"/>
    </location>
</feature>
<feature type="strand" evidence="5">
    <location>
        <begin position="143"/>
        <end position="152"/>
    </location>
</feature>
<feature type="strand" evidence="6">
    <location>
        <begin position="153"/>
        <end position="155"/>
    </location>
</feature>
<organism>
    <name type="scientific">Mus musculus</name>
    <name type="common">Mouse</name>
    <dbReference type="NCBI Taxonomy" id="10090"/>
    <lineage>
        <taxon>Eukaryota</taxon>
        <taxon>Metazoa</taxon>
        <taxon>Chordata</taxon>
        <taxon>Craniata</taxon>
        <taxon>Vertebrata</taxon>
        <taxon>Euteleostomi</taxon>
        <taxon>Mammalia</taxon>
        <taxon>Eutheria</taxon>
        <taxon>Euarchontoglires</taxon>
        <taxon>Glires</taxon>
        <taxon>Rodentia</taxon>
        <taxon>Myomorpha</taxon>
        <taxon>Muroidea</taxon>
        <taxon>Muridae</taxon>
        <taxon>Murinae</taxon>
        <taxon>Mus</taxon>
        <taxon>Mus</taxon>
    </lineage>
</organism>
<sequence>MKTHLLLWGVLAIFVKAVLVTGDDEATILADNKCMCTRVTSRIIPSTEDPNEDIVERNIRIVVPLNNRENISDPTSPLRRNFVYHLSDVCKKCDPVEVELEDQVVTATQSNICNEDDGVPETCYMYDRNKCYTTMVPLRYHGETKMVQAALTPDSCYPD</sequence>
<proteinExistence type="evidence at protein level"/>
<keyword id="KW-0002">3D-structure</keyword>
<keyword id="KW-1015">Disulfide bond</keyword>
<keyword id="KW-0325">Glycoprotein</keyword>
<keyword id="KW-1185">Reference proteome</keyword>
<keyword id="KW-0964">Secreted</keyword>
<keyword id="KW-0732">Signal</keyword>
<comment type="function">
    <text evidence="2">Serves to link two monomer units of either IgM or IgA. In the case of IgM, the J chain-joined dimer is a nucleating unit for the IgM pentamer, and in the case of IgA it induces dimers and/or larger polymers. It also helps to bind these immunoglobulins to secretory component.</text>
</comment>
<comment type="subunit">
    <text evidence="1">Part of the secretory IgA (sIgA) complex that consists of two, four or five IgA monomers, and two additional non-Ig polypeptides, namely the JCHAIN and the secretory component (the proteolytic product of PIGR). Part of the secretory IgM (sIgM) complex that consist of five IgM monomers, and two additional non-Ig polypeptides, namely the JCHAIN and the secretory component (the proteolytic product of PIGR). JCHAIN-containing IgM interacts (via CH4 domain) with FCRM (via Ig-like domain).</text>
</comment>
<comment type="subcellular location">
    <subcellularLocation>
        <location evidence="2">Secreted</location>
    </subcellularLocation>
</comment>
<dbReference type="EMBL" id="M12557">
    <property type="protein sequence ID" value="AAA38674.1"/>
    <property type="molecule type" value="Genomic_DNA"/>
</dbReference>
<dbReference type="EMBL" id="M12555">
    <property type="protein sequence ID" value="AAA38674.1"/>
    <property type="status" value="JOINED"/>
    <property type="molecule type" value="Genomic_DNA"/>
</dbReference>
<dbReference type="EMBL" id="M12556">
    <property type="protein sequence ID" value="AAA38674.1"/>
    <property type="status" value="JOINED"/>
    <property type="molecule type" value="Genomic_DNA"/>
</dbReference>
<dbReference type="EMBL" id="J00544">
    <property type="protein sequence ID" value="AAA38673.1"/>
    <property type="status" value="ALT_SEQ"/>
    <property type="molecule type" value="mRNA"/>
</dbReference>
<dbReference type="EMBL" id="M90766">
    <property type="protein sequence ID" value="AAA37918.1"/>
    <property type="molecule type" value="mRNA"/>
</dbReference>
<dbReference type="CCDS" id="CCDS19401.1"/>
<dbReference type="PIR" id="A25963">
    <property type="entry name" value="JIMS"/>
</dbReference>
<dbReference type="RefSeq" id="NP_690052.2">
    <property type="nucleotide sequence ID" value="NM_152839.4"/>
</dbReference>
<dbReference type="PDB" id="7JG1">
    <property type="method" value="EM"/>
    <property type="resolution" value="3.30 A"/>
    <property type="chains" value="J=23-159"/>
</dbReference>
<dbReference type="PDB" id="7JG2">
    <property type="method" value="EM"/>
    <property type="resolution" value="3.30 A"/>
    <property type="chains" value="J=23-159"/>
</dbReference>
<dbReference type="PDBsum" id="7JG1"/>
<dbReference type="PDBsum" id="7JG2"/>
<dbReference type="EMDB" id="EMD-22309"/>
<dbReference type="EMDB" id="EMD-22310"/>
<dbReference type="SMR" id="P01592"/>
<dbReference type="BioGRID" id="200579">
    <property type="interactions" value="1"/>
</dbReference>
<dbReference type="FunCoup" id="P01592">
    <property type="interactions" value="41"/>
</dbReference>
<dbReference type="IntAct" id="P01592">
    <property type="interactions" value="1"/>
</dbReference>
<dbReference type="MINT" id="P01592"/>
<dbReference type="STRING" id="10090.ENSMUSP00000084259"/>
<dbReference type="GlyConnect" id="694">
    <property type="glycosylation" value="2 N-Linked glycans (1 site)"/>
</dbReference>
<dbReference type="GlyCosmos" id="P01592">
    <property type="glycosylation" value="1 site, 4 glycans"/>
</dbReference>
<dbReference type="GlyGen" id="P01592">
    <property type="glycosylation" value="2 sites, 5 N-linked glycans (1 site), 1 O-linked glycan (1 site)"/>
</dbReference>
<dbReference type="iPTMnet" id="P01592"/>
<dbReference type="PhosphoSitePlus" id="P01592"/>
<dbReference type="CPTAC" id="non-CPTAC-3651"/>
<dbReference type="CPTAC" id="non-CPTAC-3920"/>
<dbReference type="jPOST" id="P01592"/>
<dbReference type="PaxDb" id="10090-ENSMUSP00000084259"/>
<dbReference type="PeptideAtlas" id="P01592"/>
<dbReference type="ProteomicsDB" id="269385"/>
<dbReference type="Antibodypedia" id="12875">
    <property type="antibodies" value="360 antibodies from 31 providers"/>
</dbReference>
<dbReference type="DNASU" id="16069"/>
<dbReference type="Ensembl" id="ENSMUST00000087033.6">
    <property type="protein sequence ID" value="ENSMUSP00000084259.4"/>
    <property type="gene ID" value="ENSMUSG00000067149.7"/>
</dbReference>
<dbReference type="GeneID" id="16069"/>
<dbReference type="KEGG" id="mmu:16069"/>
<dbReference type="UCSC" id="uc008xzu.2">
    <property type="organism name" value="mouse"/>
</dbReference>
<dbReference type="AGR" id="MGI:96493"/>
<dbReference type="CTD" id="3512"/>
<dbReference type="MGI" id="MGI:96493">
    <property type="gene designation" value="Jchain"/>
</dbReference>
<dbReference type="VEuPathDB" id="HostDB:ENSMUSG00000067149"/>
<dbReference type="eggNOG" id="ENOG502RZF4">
    <property type="taxonomic scope" value="Eukaryota"/>
</dbReference>
<dbReference type="GeneTree" id="ENSGT00390000012791"/>
<dbReference type="HOGENOM" id="CLU_1651635_0_0_1"/>
<dbReference type="InParanoid" id="P01592"/>
<dbReference type="OMA" id="KCQCARV"/>
<dbReference type="OrthoDB" id="32868at9989"/>
<dbReference type="PhylomeDB" id="P01592"/>
<dbReference type="TreeFam" id="TF335878"/>
<dbReference type="Reactome" id="R-MMU-202733">
    <property type="pathway name" value="Cell surface interactions at the vascular wall"/>
</dbReference>
<dbReference type="Reactome" id="R-MMU-2168880">
    <property type="pathway name" value="Scavenging of heme from plasma"/>
</dbReference>
<dbReference type="BioGRID-ORCS" id="16069">
    <property type="hits" value="1 hit in 76 CRISPR screens"/>
</dbReference>
<dbReference type="ChiTaRS" id="Jchain">
    <property type="organism name" value="mouse"/>
</dbReference>
<dbReference type="PRO" id="PR:P01592"/>
<dbReference type="Proteomes" id="UP000000589">
    <property type="component" value="Chromosome 5"/>
</dbReference>
<dbReference type="RNAct" id="P01592">
    <property type="molecule type" value="protein"/>
</dbReference>
<dbReference type="Bgee" id="ENSMUSG00000067149">
    <property type="expression patterns" value="Expressed in submandibular gland and 108 other cell types or tissues"/>
</dbReference>
<dbReference type="GO" id="GO:0071750">
    <property type="term" value="C:dimeric IgA immunoglobulin complex"/>
    <property type="evidence" value="ECO:0000315"/>
    <property type="project" value="UniProtKB"/>
</dbReference>
<dbReference type="GO" id="GO:0071748">
    <property type="term" value="C:monomeric IgA immunoglobulin complex"/>
    <property type="evidence" value="ECO:0007669"/>
    <property type="project" value="Ensembl"/>
</dbReference>
<dbReference type="GO" id="GO:0071756">
    <property type="term" value="C:pentameric IgM immunoglobulin complex"/>
    <property type="evidence" value="ECO:0000250"/>
    <property type="project" value="UniProtKB"/>
</dbReference>
<dbReference type="GO" id="GO:0071752">
    <property type="term" value="C:secretory dimeric IgA immunoglobulin complex"/>
    <property type="evidence" value="ECO:0007669"/>
    <property type="project" value="Ensembl"/>
</dbReference>
<dbReference type="GO" id="GO:0071751">
    <property type="term" value="C:secretory IgA immunoglobulin complex"/>
    <property type="evidence" value="ECO:0000250"/>
    <property type="project" value="UniProtKB"/>
</dbReference>
<dbReference type="GO" id="GO:0003823">
    <property type="term" value="F:antigen binding"/>
    <property type="evidence" value="ECO:0000250"/>
    <property type="project" value="MGI"/>
</dbReference>
<dbReference type="GO" id="GO:0019862">
    <property type="term" value="F:IgA binding"/>
    <property type="evidence" value="ECO:0000314"/>
    <property type="project" value="UniProtKB"/>
</dbReference>
<dbReference type="GO" id="GO:0034987">
    <property type="term" value="F:immunoglobulin receptor binding"/>
    <property type="evidence" value="ECO:0007669"/>
    <property type="project" value="Ensembl"/>
</dbReference>
<dbReference type="GO" id="GO:0042834">
    <property type="term" value="F:peptidoglycan binding"/>
    <property type="evidence" value="ECO:0007669"/>
    <property type="project" value="Ensembl"/>
</dbReference>
<dbReference type="GO" id="GO:0031210">
    <property type="term" value="F:phosphatidylcholine binding"/>
    <property type="evidence" value="ECO:0007669"/>
    <property type="project" value="Ensembl"/>
</dbReference>
<dbReference type="GO" id="GO:0042803">
    <property type="term" value="F:protein homodimerization activity"/>
    <property type="evidence" value="ECO:0007669"/>
    <property type="project" value="Ensembl"/>
</dbReference>
<dbReference type="GO" id="GO:0030674">
    <property type="term" value="F:protein-macromolecule adaptor activity"/>
    <property type="evidence" value="ECO:0000314"/>
    <property type="project" value="GO_Central"/>
</dbReference>
<dbReference type="GO" id="GO:0003697">
    <property type="term" value="F:single-stranded DNA binding"/>
    <property type="evidence" value="ECO:0007669"/>
    <property type="project" value="Ensembl"/>
</dbReference>
<dbReference type="GO" id="GO:0002250">
    <property type="term" value="P:adaptive immune response"/>
    <property type="evidence" value="ECO:0007669"/>
    <property type="project" value="Ensembl"/>
</dbReference>
<dbReference type="GO" id="GO:0019731">
    <property type="term" value="P:antibacterial humoral response"/>
    <property type="evidence" value="ECO:0007669"/>
    <property type="project" value="Ensembl"/>
</dbReference>
<dbReference type="GO" id="GO:0003094">
    <property type="term" value="P:glomerular filtration"/>
    <property type="evidence" value="ECO:0007669"/>
    <property type="project" value="Ensembl"/>
</dbReference>
<dbReference type="GO" id="GO:0006959">
    <property type="term" value="P:humoral immune response"/>
    <property type="evidence" value="ECO:0000250"/>
    <property type="project" value="MGI"/>
</dbReference>
<dbReference type="GO" id="GO:0045087">
    <property type="term" value="P:innate immune response"/>
    <property type="evidence" value="ECO:0007669"/>
    <property type="project" value="Ensembl"/>
</dbReference>
<dbReference type="GO" id="GO:0060267">
    <property type="term" value="P:positive regulation of respiratory burst"/>
    <property type="evidence" value="ECO:0007669"/>
    <property type="project" value="Ensembl"/>
</dbReference>
<dbReference type="GO" id="GO:0065003">
    <property type="term" value="P:protein-containing complex assembly"/>
    <property type="evidence" value="ECO:0007669"/>
    <property type="project" value="Ensembl"/>
</dbReference>
<dbReference type="InterPro" id="IPR024110">
    <property type="entry name" value="Ig_J"/>
</dbReference>
<dbReference type="PANTHER" id="PTHR10070">
    <property type="entry name" value="IMMUNOGLOBULIN J CHAIN"/>
    <property type="match status" value="1"/>
</dbReference>
<dbReference type="PANTHER" id="PTHR10070:SF2">
    <property type="entry name" value="IMMUNOGLOBULIN J CHAIN"/>
    <property type="match status" value="1"/>
</dbReference>
<dbReference type="Pfam" id="PF15097">
    <property type="entry name" value="Ig_J_chain"/>
    <property type="match status" value="1"/>
</dbReference>
<reference key="1">
    <citation type="journal article" date="1986" name="Proc. Natl. Acad. Sci. U.S.A.">
        <title>Immunoglobulin J chain gene from the mouse.</title>
        <authorList>
            <person name="Matsuuchi L."/>
            <person name="Cann G.M."/>
            <person name="Koshland M.E."/>
        </authorList>
    </citation>
    <scope>NUCLEOTIDE SEQUENCE [GENOMIC DNA]</scope>
</reference>
<reference key="2">
    <citation type="journal article" date="1992" name="J. Biol. Chem.">
        <title>Direct evidence that J chain regulates the polymeric structure of IgM in antibody-secreting B cells.</title>
        <authorList>
            <person name="Randall T.D."/>
            <person name="Brewer J.W."/>
            <person name="Corley R.B."/>
        </authorList>
    </citation>
    <scope>NUCLEOTIDE SEQUENCE [MRNA]</scope>
    <scope>FUNCTION</scope>
    <scope>SUBCELLULAR LOCATION</scope>
    <source>
        <strain>C57BL/10</strain>
    </source>
</reference>
<reference key="3">
    <citation type="journal article" date="1982" name="Proc. Natl. Acad. Sci. U.S.A.">
        <title>Primary structure of the immunoglobulin J chain from the mouse.</title>
        <authorList>
            <person name="Cann G.M."/>
            <person name="Zaritsky A."/>
            <person name="Koshland M.E."/>
        </authorList>
    </citation>
    <scope>NUCLEOTIDE SEQUENCE [MRNA] OF 8-159</scope>
</reference>
<reference key="4">
    <citation type="journal article" date="2010" name="Cell">
        <title>A tissue-specific atlas of mouse protein phosphorylation and expression.</title>
        <authorList>
            <person name="Huttlin E.L."/>
            <person name="Jedrychowski M.P."/>
            <person name="Elias J.E."/>
            <person name="Goswami T."/>
            <person name="Rad R."/>
            <person name="Beausoleil S.A."/>
            <person name="Villen J."/>
            <person name="Haas W."/>
            <person name="Sowa M.E."/>
            <person name="Gygi S.P."/>
        </authorList>
    </citation>
    <scope>IDENTIFICATION BY MASS SPECTROMETRY [LARGE SCALE ANALYSIS]</scope>
    <source>
        <tissue>Spleen</tissue>
    </source>
</reference>